<name>MNMG_NOVAD</name>
<sequence>MQQFDIIVVGGGHAGVEAAAVAARMGARTALVSFDPQTIGAMSCNPAIGGLGKGHLVREVDALDGLIARAADASAIHYRMLNRSKGSAVQGPRVQADRKRFKAAIQKMIAAQPDLHVVGGEVAALRLEQGRVTGVDLADGTALAGRAVVLCTGTFLGGRLFRGEERMDGGRIGEDSAHRLAAQLRDAELPMARLKTGTPPRIDGRTIDWARLPEQPSDDDPWTMSPLTPARPLPQVFCAIARTNARTHEIIRGGLDRSPLFTGAIGAQGPRYCPSIEDKIHRFGDRDGHQVFLEPEGLDDFTVYPNGVSTSLPTDVQVAMIRSMEGLEQAVITVPGYAVEYDHIDPRALRRSLEVKAIPGLYCAGQINGTTGYEEAAAQGLIAGMHAAAHVLGRAMPELDRANSYMAVMIDDLTLHGVSEPYRMLTARAEYRLRLRANNAASRLTPIGLAIGCIGDERRKWFEDRSQARSRLETALAQPATPTELNRAGIPVRADGARRSLMEWLRFPEVTLDGLRDWIGNEPFDPLLVEEVEEDAAYAPYLARQDAELRDLRASDAVPLGDGFPFADVPGLSREMVERLERAQPDSLAAAGRIAGITPAALASLLVHARRRASAAVVA</sequence>
<comment type="function">
    <text evidence="1">NAD-binding protein involved in the addition of a carboxymethylaminomethyl (cmnm) group at the wobble position (U34) of certain tRNAs, forming tRNA-cmnm(5)s(2)U34.</text>
</comment>
<comment type="cofactor">
    <cofactor evidence="1">
        <name>FAD</name>
        <dbReference type="ChEBI" id="CHEBI:57692"/>
    </cofactor>
</comment>
<comment type="subunit">
    <text evidence="1">Homodimer. Heterotetramer of two MnmE and two MnmG subunits.</text>
</comment>
<comment type="subcellular location">
    <subcellularLocation>
        <location evidence="1">Cytoplasm</location>
    </subcellularLocation>
</comment>
<comment type="similarity">
    <text evidence="1">Belongs to the MnmG family.</text>
</comment>
<keyword id="KW-0963">Cytoplasm</keyword>
<keyword id="KW-0274">FAD</keyword>
<keyword id="KW-0285">Flavoprotein</keyword>
<keyword id="KW-0520">NAD</keyword>
<keyword id="KW-1185">Reference proteome</keyword>
<keyword id="KW-0819">tRNA processing</keyword>
<dbReference type="EMBL" id="CP000248">
    <property type="protein sequence ID" value="ABD24585.1"/>
    <property type="molecule type" value="Genomic_DNA"/>
</dbReference>
<dbReference type="RefSeq" id="WP_011443799.1">
    <property type="nucleotide sequence ID" value="NC_007794.1"/>
</dbReference>
<dbReference type="SMR" id="Q2GC38"/>
<dbReference type="STRING" id="279238.Saro_0136"/>
<dbReference type="KEGG" id="nar:Saro_0136"/>
<dbReference type="eggNOG" id="COG0445">
    <property type="taxonomic scope" value="Bacteria"/>
</dbReference>
<dbReference type="HOGENOM" id="CLU_007831_2_2_5"/>
<dbReference type="Proteomes" id="UP000009134">
    <property type="component" value="Chromosome"/>
</dbReference>
<dbReference type="GO" id="GO:0005829">
    <property type="term" value="C:cytosol"/>
    <property type="evidence" value="ECO:0007669"/>
    <property type="project" value="TreeGrafter"/>
</dbReference>
<dbReference type="GO" id="GO:0050660">
    <property type="term" value="F:flavin adenine dinucleotide binding"/>
    <property type="evidence" value="ECO:0007669"/>
    <property type="project" value="UniProtKB-UniRule"/>
</dbReference>
<dbReference type="GO" id="GO:0030488">
    <property type="term" value="P:tRNA methylation"/>
    <property type="evidence" value="ECO:0007669"/>
    <property type="project" value="TreeGrafter"/>
</dbReference>
<dbReference type="GO" id="GO:0002098">
    <property type="term" value="P:tRNA wobble uridine modification"/>
    <property type="evidence" value="ECO:0007669"/>
    <property type="project" value="InterPro"/>
</dbReference>
<dbReference type="FunFam" id="3.50.50.60:FF:000002">
    <property type="entry name" value="tRNA uridine 5-carboxymethylaminomethyl modification enzyme MnmG"/>
    <property type="match status" value="1"/>
</dbReference>
<dbReference type="Gene3D" id="3.50.50.60">
    <property type="entry name" value="FAD/NAD(P)-binding domain"/>
    <property type="match status" value="2"/>
</dbReference>
<dbReference type="Gene3D" id="1.10.150.570">
    <property type="entry name" value="GidA associated domain, C-terminal subdomain"/>
    <property type="match status" value="1"/>
</dbReference>
<dbReference type="HAMAP" id="MF_00129">
    <property type="entry name" value="MnmG_GidA"/>
    <property type="match status" value="1"/>
</dbReference>
<dbReference type="InterPro" id="IPR036188">
    <property type="entry name" value="FAD/NAD-bd_sf"/>
</dbReference>
<dbReference type="InterPro" id="IPR049312">
    <property type="entry name" value="GIDA_C_N"/>
</dbReference>
<dbReference type="InterPro" id="IPR004416">
    <property type="entry name" value="MnmG"/>
</dbReference>
<dbReference type="InterPro" id="IPR002218">
    <property type="entry name" value="MnmG-rel"/>
</dbReference>
<dbReference type="InterPro" id="IPR020595">
    <property type="entry name" value="MnmG-rel_CS"/>
</dbReference>
<dbReference type="InterPro" id="IPR026904">
    <property type="entry name" value="MnmG_C"/>
</dbReference>
<dbReference type="InterPro" id="IPR047001">
    <property type="entry name" value="MnmG_C_subdom"/>
</dbReference>
<dbReference type="InterPro" id="IPR044920">
    <property type="entry name" value="MnmG_C_subdom_sf"/>
</dbReference>
<dbReference type="InterPro" id="IPR040131">
    <property type="entry name" value="MnmG_N"/>
</dbReference>
<dbReference type="NCBIfam" id="TIGR00136">
    <property type="entry name" value="mnmG_gidA"/>
    <property type="match status" value="1"/>
</dbReference>
<dbReference type="PANTHER" id="PTHR11806">
    <property type="entry name" value="GLUCOSE INHIBITED DIVISION PROTEIN A"/>
    <property type="match status" value="1"/>
</dbReference>
<dbReference type="PANTHER" id="PTHR11806:SF0">
    <property type="entry name" value="PROTEIN MTO1 HOMOLOG, MITOCHONDRIAL"/>
    <property type="match status" value="1"/>
</dbReference>
<dbReference type="Pfam" id="PF01134">
    <property type="entry name" value="GIDA"/>
    <property type="match status" value="1"/>
</dbReference>
<dbReference type="Pfam" id="PF21680">
    <property type="entry name" value="GIDA_C_1st"/>
    <property type="match status" value="1"/>
</dbReference>
<dbReference type="Pfam" id="PF13932">
    <property type="entry name" value="SAM_GIDA_C"/>
    <property type="match status" value="1"/>
</dbReference>
<dbReference type="SMART" id="SM01228">
    <property type="entry name" value="GIDA_assoc_3"/>
    <property type="match status" value="1"/>
</dbReference>
<dbReference type="SUPFAM" id="SSF51905">
    <property type="entry name" value="FAD/NAD(P)-binding domain"/>
    <property type="match status" value="1"/>
</dbReference>
<dbReference type="PROSITE" id="PS01280">
    <property type="entry name" value="GIDA_1"/>
    <property type="match status" value="1"/>
</dbReference>
<gene>
    <name evidence="1" type="primary">mnmG</name>
    <name evidence="1" type="synonym">gidA</name>
    <name type="ordered locus">Saro_0136</name>
</gene>
<accession>Q2GC38</accession>
<proteinExistence type="inferred from homology"/>
<protein>
    <recommendedName>
        <fullName evidence="1">tRNA uridine 5-carboxymethylaminomethyl modification enzyme MnmG</fullName>
    </recommendedName>
    <alternativeName>
        <fullName evidence="1">Glucose-inhibited division protein A</fullName>
    </alternativeName>
</protein>
<evidence type="ECO:0000255" key="1">
    <source>
        <dbReference type="HAMAP-Rule" id="MF_00129"/>
    </source>
</evidence>
<reference key="1">
    <citation type="submission" date="2006-01" db="EMBL/GenBank/DDBJ databases">
        <title>Complete sequence of Novosphingobium aromaticivorans DSM 12444.</title>
        <authorList>
            <consortium name="US DOE Joint Genome Institute"/>
            <person name="Copeland A."/>
            <person name="Lucas S."/>
            <person name="Lapidus A."/>
            <person name="Barry K."/>
            <person name="Detter J.C."/>
            <person name="Glavina T."/>
            <person name="Hammon N."/>
            <person name="Israni S."/>
            <person name="Pitluck S."/>
            <person name="Chain P."/>
            <person name="Malfatti S."/>
            <person name="Shin M."/>
            <person name="Vergez L."/>
            <person name="Schmutz J."/>
            <person name="Larimer F."/>
            <person name="Land M."/>
            <person name="Kyrpides N."/>
            <person name="Ivanova N."/>
            <person name="Fredrickson J."/>
            <person name="Balkwill D."/>
            <person name="Romine M.F."/>
            <person name="Richardson P."/>
        </authorList>
    </citation>
    <scope>NUCLEOTIDE SEQUENCE [LARGE SCALE GENOMIC DNA]</scope>
    <source>
        <strain>ATCC 700278 / DSM 12444 / CCUG 56034 / CIP 105152 / NBRC 16084 / F199</strain>
    </source>
</reference>
<feature type="chain" id="PRO_1000016630" description="tRNA uridine 5-carboxymethylaminomethyl modification enzyme MnmG">
    <location>
        <begin position="1"/>
        <end position="619"/>
    </location>
</feature>
<feature type="binding site" evidence="1">
    <location>
        <begin position="10"/>
        <end position="15"/>
    </location>
    <ligand>
        <name>FAD</name>
        <dbReference type="ChEBI" id="CHEBI:57692"/>
    </ligand>
</feature>
<feature type="binding site" evidence="1">
    <location>
        <begin position="269"/>
        <end position="283"/>
    </location>
    <ligand>
        <name>NAD(+)</name>
        <dbReference type="ChEBI" id="CHEBI:57540"/>
    </ligand>
</feature>
<organism>
    <name type="scientific">Novosphingobium aromaticivorans (strain ATCC 700278 / DSM 12444 / CCUG 56034 / CIP 105152 / NBRC 16084 / F199)</name>
    <dbReference type="NCBI Taxonomy" id="279238"/>
    <lineage>
        <taxon>Bacteria</taxon>
        <taxon>Pseudomonadati</taxon>
        <taxon>Pseudomonadota</taxon>
        <taxon>Alphaproteobacteria</taxon>
        <taxon>Sphingomonadales</taxon>
        <taxon>Sphingomonadaceae</taxon>
        <taxon>Novosphingobium</taxon>
    </lineage>
</organism>